<comment type="function">
    <text evidence="1">S-adenosyl-L-methionine-dependent methyltransferase that catalyzes the trimethylation of the amino group of the modified target histidine residue in translation elongation factor 2 (EF-2), to form an intermediate called diphthine. The three successive methylation reactions represent the second step of diphthamide biosynthesis.</text>
</comment>
<comment type="catalytic activity">
    <reaction evidence="1">
        <text>2-[(3S)-amino-3-carboxypropyl]-L-histidyl-[translation elongation factor 2] + 3 S-adenosyl-L-methionine = diphthine-[translation elongation factor 2] + 3 S-adenosyl-L-homocysteine + 3 H(+)</text>
        <dbReference type="Rhea" id="RHEA:36415"/>
        <dbReference type="Rhea" id="RHEA-COMP:9749"/>
        <dbReference type="Rhea" id="RHEA-COMP:10172"/>
        <dbReference type="ChEBI" id="CHEBI:15378"/>
        <dbReference type="ChEBI" id="CHEBI:57856"/>
        <dbReference type="ChEBI" id="CHEBI:59789"/>
        <dbReference type="ChEBI" id="CHEBI:73995"/>
        <dbReference type="ChEBI" id="CHEBI:82696"/>
        <dbReference type="EC" id="2.1.1.98"/>
    </reaction>
</comment>
<comment type="pathway">
    <text evidence="1">Protein modification; peptidyl-diphthamide biosynthesis.</text>
</comment>
<comment type="subunit">
    <text evidence="1">Homodimer.</text>
</comment>
<comment type="similarity">
    <text evidence="1">Belongs to the diphthine synthase family.</text>
</comment>
<dbReference type="EC" id="2.1.1.98" evidence="1"/>
<dbReference type="EMBL" id="CP000559">
    <property type="protein sequence ID" value="ABN06562.1"/>
    <property type="molecule type" value="Genomic_DNA"/>
</dbReference>
<dbReference type="RefSeq" id="WP_011832763.1">
    <property type="nucleotide sequence ID" value="NC_008942.1"/>
</dbReference>
<dbReference type="SMR" id="A2SQF6"/>
<dbReference type="STRING" id="410358.Mlab_0386"/>
<dbReference type="GeneID" id="4794720"/>
<dbReference type="KEGG" id="mla:Mlab_0386"/>
<dbReference type="eggNOG" id="arCOG04161">
    <property type="taxonomic scope" value="Archaea"/>
</dbReference>
<dbReference type="HOGENOM" id="CLU_066040_0_0_2"/>
<dbReference type="OrthoDB" id="39139at2157"/>
<dbReference type="UniPathway" id="UPA00559"/>
<dbReference type="Proteomes" id="UP000000365">
    <property type="component" value="Chromosome"/>
</dbReference>
<dbReference type="GO" id="GO:0004164">
    <property type="term" value="F:diphthine synthase activity"/>
    <property type="evidence" value="ECO:0007669"/>
    <property type="project" value="UniProtKB-UniRule"/>
</dbReference>
<dbReference type="GO" id="GO:0032259">
    <property type="term" value="P:methylation"/>
    <property type="evidence" value="ECO:0007669"/>
    <property type="project" value="UniProtKB-KW"/>
</dbReference>
<dbReference type="GO" id="GO:0017183">
    <property type="term" value="P:protein histidyl modification to diphthamide"/>
    <property type="evidence" value="ECO:0007669"/>
    <property type="project" value="UniProtKB-UniRule"/>
</dbReference>
<dbReference type="CDD" id="cd11647">
    <property type="entry name" value="DHP5_DphB"/>
    <property type="match status" value="1"/>
</dbReference>
<dbReference type="Gene3D" id="3.40.1010.10">
    <property type="entry name" value="Cobalt-precorrin-4 Transmethylase, Domain 1"/>
    <property type="match status" value="1"/>
</dbReference>
<dbReference type="Gene3D" id="3.30.950.10">
    <property type="entry name" value="Methyltransferase, Cobalt-precorrin-4 Transmethylase, Domain 2"/>
    <property type="match status" value="1"/>
</dbReference>
<dbReference type="HAMAP" id="MF_01084">
    <property type="entry name" value="Diphthine_synth"/>
    <property type="match status" value="1"/>
</dbReference>
<dbReference type="InterPro" id="IPR000878">
    <property type="entry name" value="4pyrrol_Mease"/>
</dbReference>
<dbReference type="InterPro" id="IPR035996">
    <property type="entry name" value="4pyrrol_Methylase_sf"/>
</dbReference>
<dbReference type="InterPro" id="IPR014777">
    <property type="entry name" value="4pyrrole_Mease_sub1"/>
</dbReference>
<dbReference type="InterPro" id="IPR014776">
    <property type="entry name" value="4pyrrole_Mease_sub2"/>
</dbReference>
<dbReference type="InterPro" id="IPR004551">
    <property type="entry name" value="Dphthn_synthase"/>
</dbReference>
<dbReference type="NCBIfam" id="TIGR00522">
    <property type="entry name" value="dph5"/>
    <property type="match status" value="1"/>
</dbReference>
<dbReference type="PANTHER" id="PTHR10882:SF0">
    <property type="entry name" value="DIPHTHINE METHYL ESTER SYNTHASE"/>
    <property type="match status" value="1"/>
</dbReference>
<dbReference type="PANTHER" id="PTHR10882">
    <property type="entry name" value="DIPHTHINE SYNTHASE"/>
    <property type="match status" value="1"/>
</dbReference>
<dbReference type="Pfam" id="PF00590">
    <property type="entry name" value="TP_methylase"/>
    <property type="match status" value="1"/>
</dbReference>
<dbReference type="PIRSF" id="PIRSF036432">
    <property type="entry name" value="Diphthine_synth"/>
    <property type="match status" value="1"/>
</dbReference>
<dbReference type="SUPFAM" id="SSF53790">
    <property type="entry name" value="Tetrapyrrole methylase"/>
    <property type="match status" value="1"/>
</dbReference>
<reference key="1">
    <citation type="journal article" date="2009" name="Stand. Genomic Sci.">
        <title>Complete genome sequence of Methanocorpusculum labreanum type strain Z.</title>
        <authorList>
            <person name="Anderson I.J."/>
            <person name="Sieprawska-Lupa M."/>
            <person name="Goltsman E."/>
            <person name="Lapidus A."/>
            <person name="Copeland A."/>
            <person name="Glavina Del Rio T."/>
            <person name="Tice H."/>
            <person name="Dalin E."/>
            <person name="Barry K."/>
            <person name="Pitluck S."/>
            <person name="Hauser L."/>
            <person name="Land M."/>
            <person name="Lucas S."/>
            <person name="Richardson P."/>
            <person name="Whitman W.B."/>
            <person name="Kyrpides N.C."/>
        </authorList>
    </citation>
    <scope>NUCLEOTIDE SEQUENCE [LARGE SCALE GENOMIC DNA]</scope>
    <source>
        <strain>ATCC 43576 / DSM 4855 / Z</strain>
    </source>
</reference>
<keyword id="KW-0489">Methyltransferase</keyword>
<keyword id="KW-1185">Reference proteome</keyword>
<keyword id="KW-0949">S-adenosyl-L-methionine</keyword>
<keyword id="KW-0808">Transferase</keyword>
<accession>A2SQF6</accession>
<feature type="chain" id="PRO_1000064820" description="Diphthine synthase">
    <location>
        <begin position="1"/>
        <end position="252"/>
    </location>
</feature>
<feature type="binding site" evidence="1">
    <location>
        <position position="9"/>
    </location>
    <ligand>
        <name>S-adenosyl-L-methionine</name>
        <dbReference type="ChEBI" id="CHEBI:59789"/>
    </ligand>
</feature>
<feature type="binding site" evidence="1">
    <location>
        <position position="85"/>
    </location>
    <ligand>
        <name>S-adenosyl-L-methionine</name>
        <dbReference type="ChEBI" id="CHEBI:59789"/>
    </ligand>
</feature>
<feature type="binding site" evidence="1">
    <location>
        <position position="88"/>
    </location>
    <ligand>
        <name>S-adenosyl-L-methionine</name>
        <dbReference type="ChEBI" id="CHEBI:59789"/>
    </ligand>
</feature>
<feature type="binding site" evidence="1">
    <location>
        <begin position="113"/>
        <end position="114"/>
    </location>
    <ligand>
        <name>S-adenosyl-L-methionine</name>
        <dbReference type="ChEBI" id="CHEBI:59789"/>
    </ligand>
</feature>
<feature type="binding site" evidence="1">
    <location>
        <position position="165"/>
    </location>
    <ligand>
        <name>S-adenosyl-L-methionine</name>
        <dbReference type="ChEBI" id="CHEBI:59789"/>
    </ligand>
</feature>
<feature type="binding site" evidence="1">
    <location>
        <position position="204"/>
    </location>
    <ligand>
        <name>S-adenosyl-L-methionine</name>
        <dbReference type="ChEBI" id="CHEBI:59789"/>
    </ligand>
</feature>
<feature type="binding site" evidence="1">
    <location>
        <position position="229"/>
    </location>
    <ligand>
        <name>S-adenosyl-L-methionine</name>
        <dbReference type="ChEBI" id="CHEBI:59789"/>
    </ligand>
</feature>
<sequence>MLTFIGLGLFDEYDVSVRGLDAIKSADTVFLEVYTSVLMGAPIERLEAFYGKKITPLYREDVEIHADKILDAAEFGNAVFLTAGDSMVATTHSDLRIRAADRNIPTTIIHGASITTAVCGLSGLQNYRFGKSVSVPFPYGKWFPMTPIEVISANLKENLHTLVFLDIQKDKERYMKISEAVDLLEEQARRVDAGIPLYVGIARAGSPEPTVHAGNAEEMKAFDFGSPLHILIVPATLHEIEREYLERFAGLC</sequence>
<name>DPHB_METLZ</name>
<proteinExistence type="inferred from homology"/>
<gene>
    <name evidence="1" type="primary">dphB</name>
    <name type="ordered locus">Mlab_0386</name>
</gene>
<evidence type="ECO:0000255" key="1">
    <source>
        <dbReference type="HAMAP-Rule" id="MF_01084"/>
    </source>
</evidence>
<organism>
    <name type="scientific">Methanocorpusculum labreanum (strain ATCC 43576 / DSM 4855 / Z)</name>
    <dbReference type="NCBI Taxonomy" id="410358"/>
    <lineage>
        <taxon>Archaea</taxon>
        <taxon>Methanobacteriati</taxon>
        <taxon>Methanobacteriota</taxon>
        <taxon>Stenosarchaea group</taxon>
        <taxon>Methanomicrobia</taxon>
        <taxon>Methanomicrobiales</taxon>
        <taxon>Methanocorpusculaceae</taxon>
        <taxon>Methanocorpusculum</taxon>
    </lineage>
</organism>
<protein>
    <recommendedName>
        <fullName evidence="1">Diphthine synthase</fullName>
        <ecNumber evidence="1">2.1.1.98</ecNumber>
    </recommendedName>
    <alternativeName>
        <fullName evidence="1">Diphthamide biosynthesis methyltransferase</fullName>
    </alternativeName>
</protein>